<proteinExistence type="evidence at protein level"/>
<gene>
    <name evidence="1 11" type="primary">psbV</name>
</gene>
<reference key="1">
    <citation type="journal article" date="2001" name="Plant Cell Physiol.">
        <title>Functional analysis of psbV and a novel c-type cytochrome gene psbV2 of the thermophilic cyanobacterium Thermosynechococcus elongatus strain BP-1.</title>
        <authorList>
            <person name="Katoh H."/>
            <person name="Itoh S."/>
            <person name="Shen J.-R."/>
            <person name="Ikeuchi M."/>
        </authorList>
    </citation>
    <scope>NUCLEOTIDE SEQUENCE [GENOMIC DNA]</scope>
</reference>
<reference key="2">
    <citation type="journal article" date="1992" name="FEBS Lett.">
        <title>Stoichiometric association of extrinsic cytochrome c550 and 12 kDa protein with a highly purified oxygen-evolving photosystem II core complex from Synechococcus vulcanus.</title>
        <authorList>
            <person name="Shen J.-R."/>
            <person name="Ikeuchi M."/>
            <person name="Inoue Y."/>
        </authorList>
    </citation>
    <scope>PROTEIN SEQUENCE OF 27-62</scope>
    <scope>SUGGESTION OF FUNCTION IN OXYGEN-EVOLUTION</scope>
    <scope>ASSOCIATION WITH PHOTOSYSTEM II</scope>
    <scope>SUBUNIT</scope>
</reference>
<reference key="3">
    <citation type="journal article" date="2002" name="Plant Cell Physiol.">
        <title>Low-molecular-mass polypeptide components of a photosystem II preparation from the thermophilic cyanobacterium Thermosynechococcus vulcanus.</title>
        <authorList>
            <person name="Kashino Y."/>
            <person name="Koike H."/>
            <person name="Yoshio M."/>
            <person name="Egashira H."/>
            <person name="Ikeuchi M."/>
            <person name="Pakrasi H.B."/>
            <person name="Satoh K."/>
        </authorList>
    </citation>
    <scope>PROTEIN SEQUENCE OF 27-39</scope>
    <scope>COMPOSITION OF PHOTOSYSTEM II</scope>
    <scope>SUBUNIT</scope>
</reference>
<reference key="4">
    <citation type="journal article" date="1993" name="Biochemistry">
        <title>Binding and functional properties of two new extrinsic components, cytochrome c-550 and a 12-kDa protein, in cyanobacterial photosystem II.</title>
        <authorList>
            <person name="Shen J.-R."/>
            <person name="Inoue Y."/>
        </authorList>
    </citation>
    <scope>FUNCTION IN OXYGEN-EVOLVING COMPLEX</scope>
</reference>
<reference key="5">
    <citation type="journal article" date="1993" name="J. Biol. Chem.">
        <title>Cellular localization of cytochrome c550. Its specific association with cyanobacterial photosystem II.</title>
        <authorList>
            <person name="Shen J.-R."/>
            <person name="Inoue Y."/>
        </authorList>
    </citation>
    <scope>TIGHT ASSOCIATION WITH PHOTOSYSTEM II</scope>
    <scope>COFACTOR</scope>
    <scope>SUBUNIT</scope>
    <scope>SUBCELLULAR LOCATION</scope>
</reference>
<reference key="6">
    <citation type="journal article" date="2003" name="Plant Cell Physiol.">
        <title>Comparison of binding and functional properties of two extrinsic components, cyt c550 and a 12 kDa protein, in cyanobacterial PSII with those in red algal PSII.</title>
        <authorList>
            <person name="Enami I."/>
            <person name="Iwai M."/>
            <person name="Akiyama A."/>
            <person name="Suzuki T."/>
            <person name="Okumura A."/>
            <person name="Katoh T."/>
            <person name="Tada O."/>
            <person name="Ohta H."/>
            <person name="Shen J.-R."/>
        </authorList>
    </citation>
    <scope>RECONSTITUTION EXPERIMENTS</scope>
</reference>
<reference key="7">
    <citation type="journal article" date="2003" name="Proc. Natl. Acad. Sci. U.S.A.">
        <title>Crystal structure of oxygen-evolving photosystem II from Thermosynechococcus vulcanus at 3.7-A resolution.</title>
        <authorList>
            <person name="Kamiya N."/>
            <person name="Shen J.-R."/>
        </authorList>
    </citation>
    <scope>X-RAY CRYSTALLOGRAPHY (3.7 ANGSTROMS) OF 27-163 IN PHOTOSYSTEM II</scope>
    <scope>COFACTOR</scope>
    <scope>SUBUNIT</scope>
    <scope>SUBCELLULAR LOCATION</scope>
</reference>
<reference key="8">
    <citation type="journal article" date="2009" name="Proc. Natl. Acad. Sci. U.S.A.">
        <title>Location of chloride and its possible functions in oxygen-evolving photosystem II revealed by X-ray crystallography.</title>
        <authorList>
            <person name="Kawakami K."/>
            <person name="Umena Y."/>
            <person name="Kamiya N."/>
            <person name="Shen J.R."/>
        </authorList>
    </citation>
    <scope>X-RAY CRYSTALLOGRAPHY (3.7 ANGSTROMS) OF 27-163 IN PHOTOSYSTEM II</scope>
    <scope>FUNCTION</scope>
    <scope>COFACTOR</scope>
    <scope>SUBUNIT</scope>
    <scope>SUBCELLULAR LOCATION</scope>
</reference>
<reference key="9">
    <citation type="journal article" date="2011" name="Nature">
        <title>Crystal structure of oxygen-evolving photosystem II at a resolution of 1.9 A.</title>
        <authorList>
            <person name="Umena Y."/>
            <person name="Kawakami K."/>
            <person name="Shen J.R."/>
            <person name="Kamiya N."/>
        </authorList>
    </citation>
    <scope>X-RAY CRYSTALLOGRAPHY (1.9 ANGSTROMS) IN COMPLEX WITH HEME IN PHOTOSYSTEM II</scope>
    <scope>COFACTOR</scope>
    <scope>SUBUNIT</scope>
    <scope>SUBCELLULAR LOCATION</scope>
</reference>
<reference key="10">
    <citation type="journal article" date="2013" name="Proc. Natl. Acad. Sci. U.S.A.">
        <title>Structure of Sr-substituted photosystem II at 2.1 A resolution and its implications in the mechanism of water oxidation.</title>
        <authorList>
            <person name="Koua F.H."/>
            <person name="Umena Y."/>
            <person name="Kawakami K."/>
            <person name="Shen J.R."/>
        </authorList>
    </citation>
    <scope>X-RAY CRYSTALLOGRAPHY (2.1 ANGSTROMS) OF 27-163 IN COMPLEX WITH HEME IN PHOTOSYSTEM II</scope>
    <scope>FUNCTION</scope>
    <scope>COFACTOR</scope>
    <scope>SUBUNIT</scope>
    <scope>SUBCELLULAR LOCATION</scope>
</reference>
<protein>
    <recommendedName>
        <fullName evidence="1">Photosystem II extrinsic protein V</fullName>
        <shortName evidence="1">PsbV</shortName>
    </recommendedName>
    <alternativeName>
        <fullName evidence="1 11">Cytochrome c-550</fullName>
    </alternativeName>
    <alternativeName>
        <fullName evidence="1">Cytochrome c550</fullName>
    </alternativeName>
    <alternativeName>
        <fullName evidence="1">Low-potential cytochrome c</fullName>
    </alternativeName>
</protein>
<dbReference type="EMBL" id="AB052598">
    <property type="protein sequence ID" value="BAB20063.1"/>
    <property type="molecule type" value="Genomic_DNA"/>
</dbReference>
<dbReference type="PDB" id="1IZL">
    <property type="method" value="X-ray"/>
    <property type="resolution" value="3.70 A"/>
    <property type="chains" value="0/V=27-163"/>
</dbReference>
<dbReference type="PDB" id="3A0B">
    <property type="method" value="X-ray"/>
    <property type="resolution" value="3.70 A"/>
    <property type="chains" value="V/v=27-163"/>
</dbReference>
<dbReference type="PDB" id="3A0H">
    <property type="method" value="X-ray"/>
    <property type="resolution" value="4.00 A"/>
    <property type="chains" value="V/v=27-163"/>
</dbReference>
<dbReference type="PDB" id="3WU2">
    <property type="method" value="X-ray"/>
    <property type="resolution" value="1.90 A"/>
    <property type="chains" value="V/v=27-163"/>
</dbReference>
<dbReference type="PDB" id="4IL6">
    <property type="method" value="X-ray"/>
    <property type="resolution" value="2.10 A"/>
    <property type="chains" value="V/v=27-163"/>
</dbReference>
<dbReference type="PDB" id="4UB6">
    <property type="method" value="X-ray"/>
    <property type="resolution" value="1.95 A"/>
    <property type="chains" value="V/v=27-163"/>
</dbReference>
<dbReference type="PDB" id="4UB8">
    <property type="method" value="X-ray"/>
    <property type="resolution" value="1.95 A"/>
    <property type="chains" value="V/v=27-163"/>
</dbReference>
<dbReference type="PDB" id="5B5E">
    <property type="method" value="X-ray"/>
    <property type="resolution" value="1.87 A"/>
    <property type="chains" value="V/v=27-163"/>
</dbReference>
<dbReference type="PDB" id="5B66">
    <property type="method" value="X-ray"/>
    <property type="resolution" value="1.85 A"/>
    <property type="chains" value="V/v=27-163"/>
</dbReference>
<dbReference type="PDB" id="5GTH">
    <property type="method" value="X-ray"/>
    <property type="resolution" value="2.50 A"/>
    <property type="chains" value="V/v=27-163"/>
</dbReference>
<dbReference type="PDB" id="5GTI">
    <property type="method" value="X-ray"/>
    <property type="resolution" value="2.50 A"/>
    <property type="chains" value="V/v=27-163"/>
</dbReference>
<dbReference type="PDB" id="5V2C">
    <property type="method" value="X-ray"/>
    <property type="resolution" value="1.90 A"/>
    <property type="chains" value="V/v=27-163"/>
</dbReference>
<dbReference type="PDB" id="5WS5">
    <property type="method" value="X-ray"/>
    <property type="resolution" value="2.35 A"/>
    <property type="chains" value="V/v=27-163"/>
</dbReference>
<dbReference type="PDB" id="5WS6">
    <property type="method" value="X-ray"/>
    <property type="resolution" value="2.35 A"/>
    <property type="chains" value="V/v=27-163"/>
</dbReference>
<dbReference type="PDB" id="6JLJ">
    <property type="method" value="X-ray"/>
    <property type="resolution" value="2.15 A"/>
    <property type="chains" value="V/v=27-163"/>
</dbReference>
<dbReference type="PDB" id="6JLK">
    <property type="method" value="X-ray"/>
    <property type="resolution" value="2.15 A"/>
    <property type="chains" value="V/v=27-163"/>
</dbReference>
<dbReference type="PDB" id="6JLL">
    <property type="method" value="X-ray"/>
    <property type="resolution" value="2.15 A"/>
    <property type="chains" value="V/v=27-163"/>
</dbReference>
<dbReference type="PDB" id="6JLM">
    <property type="method" value="X-ray"/>
    <property type="resolution" value="2.35 A"/>
    <property type="chains" value="V/v=27-163"/>
</dbReference>
<dbReference type="PDB" id="6JLN">
    <property type="method" value="X-ray"/>
    <property type="resolution" value="2.40 A"/>
    <property type="chains" value="V/v=27-163"/>
</dbReference>
<dbReference type="PDB" id="6JLO">
    <property type="method" value="X-ray"/>
    <property type="resolution" value="2.40 A"/>
    <property type="chains" value="V/v=27-163"/>
</dbReference>
<dbReference type="PDB" id="6JLP">
    <property type="method" value="X-ray"/>
    <property type="resolution" value="2.50 A"/>
    <property type="chains" value="V/v=27-163"/>
</dbReference>
<dbReference type="PDB" id="7CJI">
    <property type="method" value="X-ray"/>
    <property type="resolution" value="2.35 A"/>
    <property type="chains" value="V/v=27-163"/>
</dbReference>
<dbReference type="PDB" id="7CJJ">
    <property type="method" value="X-ray"/>
    <property type="resolution" value="2.40 A"/>
    <property type="chains" value="V/v=27-163"/>
</dbReference>
<dbReference type="PDB" id="7COU">
    <property type="method" value="X-ray"/>
    <property type="resolution" value="2.25 A"/>
    <property type="chains" value="V/v=27-163"/>
</dbReference>
<dbReference type="PDB" id="7D1T">
    <property type="method" value="EM"/>
    <property type="resolution" value="1.95 A"/>
    <property type="chains" value="V/v=27-163"/>
</dbReference>
<dbReference type="PDB" id="7D1U">
    <property type="method" value="EM"/>
    <property type="resolution" value="2.08 A"/>
    <property type="chains" value="V/v=27-163"/>
</dbReference>
<dbReference type="PDB" id="7EDA">
    <property type="method" value="EM"/>
    <property type="resolution" value="2.78 A"/>
    <property type="chains" value="V=1-163"/>
</dbReference>
<dbReference type="PDB" id="8GN0">
    <property type="method" value="X-ray"/>
    <property type="resolution" value="2.15 A"/>
    <property type="chains" value="V/v=27-163"/>
</dbReference>
<dbReference type="PDB" id="8GN1">
    <property type="method" value="X-ray"/>
    <property type="resolution" value="2.10 A"/>
    <property type="chains" value="V/v=27-163"/>
</dbReference>
<dbReference type="PDB" id="8GN2">
    <property type="method" value="X-ray"/>
    <property type="resolution" value="1.95 A"/>
    <property type="chains" value="V/v=27-163"/>
</dbReference>
<dbReference type="PDB" id="8IR5">
    <property type="method" value="X-ray"/>
    <property type="resolution" value="2.15 A"/>
    <property type="chains" value="V/v=27-163"/>
</dbReference>
<dbReference type="PDB" id="8IR6">
    <property type="method" value="X-ray"/>
    <property type="resolution" value="2.20 A"/>
    <property type="chains" value="V/v=27-163"/>
</dbReference>
<dbReference type="PDB" id="8IR7">
    <property type="method" value="X-ray"/>
    <property type="resolution" value="2.25 A"/>
    <property type="chains" value="V/v=27-163"/>
</dbReference>
<dbReference type="PDB" id="8IR8">
    <property type="method" value="X-ray"/>
    <property type="resolution" value="2.25 A"/>
    <property type="chains" value="V/v=27-163"/>
</dbReference>
<dbReference type="PDB" id="8IR9">
    <property type="method" value="X-ray"/>
    <property type="resolution" value="2.20 A"/>
    <property type="chains" value="V/v=27-163"/>
</dbReference>
<dbReference type="PDB" id="8IRA">
    <property type="method" value="X-ray"/>
    <property type="resolution" value="2.20 A"/>
    <property type="chains" value="V/v=27-163"/>
</dbReference>
<dbReference type="PDB" id="8IRB">
    <property type="method" value="X-ray"/>
    <property type="resolution" value="2.30 A"/>
    <property type="chains" value="V/v=27-163"/>
</dbReference>
<dbReference type="PDB" id="8IRC">
    <property type="method" value="X-ray"/>
    <property type="resolution" value="2.25 A"/>
    <property type="chains" value="V/v=27-163"/>
</dbReference>
<dbReference type="PDB" id="8IRD">
    <property type="method" value="X-ray"/>
    <property type="resolution" value="2.30 A"/>
    <property type="chains" value="V/v=27-163"/>
</dbReference>
<dbReference type="PDB" id="8IRE">
    <property type="method" value="X-ray"/>
    <property type="resolution" value="2.25 A"/>
    <property type="chains" value="V/v=27-163"/>
</dbReference>
<dbReference type="PDB" id="8IRF">
    <property type="method" value="X-ray"/>
    <property type="resolution" value="2.25 A"/>
    <property type="chains" value="V/v=27-163"/>
</dbReference>
<dbReference type="PDB" id="8IRG">
    <property type="method" value="X-ray"/>
    <property type="resolution" value="2.30 A"/>
    <property type="chains" value="V/v=27-163"/>
</dbReference>
<dbReference type="PDB" id="8IRH">
    <property type="method" value="X-ray"/>
    <property type="resolution" value="2.25 A"/>
    <property type="chains" value="V/v=27-163"/>
</dbReference>
<dbReference type="PDB" id="8IRI">
    <property type="method" value="X-ray"/>
    <property type="resolution" value="2.25 A"/>
    <property type="chains" value="V/v=27-163"/>
</dbReference>
<dbReference type="PDBsum" id="1IZL"/>
<dbReference type="PDBsum" id="3A0B"/>
<dbReference type="PDBsum" id="3A0H"/>
<dbReference type="PDBsum" id="3WU2"/>
<dbReference type="PDBsum" id="4IL6"/>
<dbReference type="PDBsum" id="4UB6"/>
<dbReference type="PDBsum" id="4UB8"/>
<dbReference type="PDBsum" id="5B5E"/>
<dbReference type="PDBsum" id="5B66"/>
<dbReference type="PDBsum" id="5GTH"/>
<dbReference type="PDBsum" id="5GTI"/>
<dbReference type="PDBsum" id="5V2C"/>
<dbReference type="PDBsum" id="5WS5"/>
<dbReference type="PDBsum" id="5WS6"/>
<dbReference type="PDBsum" id="6JLJ"/>
<dbReference type="PDBsum" id="6JLK"/>
<dbReference type="PDBsum" id="6JLL"/>
<dbReference type="PDBsum" id="6JLM"/>
<dbReference type="PDBsum" id="6JLN"/>
<dbReference type="PDBsum" id="6JLO"/>
<dbReference type="PDBsum" id="6JLP"/>
<dbReference type="PDBsum" id="7CJI"/>
<dbReference type="PDBsum" id="7CJJ"/>
<dbReference type="PDBsum" id="7COU"/>
<dbReference type="PDBsum" id="7D1T"/>
<dbReference type="PDBsum" id="7D1U"/>
<dbReference type="PDBsum" id="7EDA"/>
<dbReference type="PDBsum" id="8GN0"/>
<dbReference type="PDBsum" id="8GN1"/>
<dbReference type="PDBsum" id="8GN2"/>
<dbReference type="PDBsum" id="8IR5"/>
<dbReference type="PDBsum" id="8IR6"/>
<dbReference type="PDBsum" id="8IR7"/>
<dbReference type="PDBsum" id="8IR8"/>
<dbReference type="PDBsum" id="8IR9"/>
<dbReference type="PDBsum" id="8IRA"/>
<dbReference type="PDBsum" id="8IRB"/>
<dbReference type="PDBsum" id="8IRC"/>
<dbReference type="PDBsum" id="8IRD"/>
<dbReference type="PDBsum" id="8IRE"/>
<dbReference type="PDBsum" id="8IRF"/>
<dbReference type="PDBsum" id="8IRG"/>
<dbReference type="PDBsum" id="8IRH"/>
<dbReference type="PDBsum" id="8IRI"/>
<dbReference type="EMDB" id="EMD-30547"/>
<dbReference type="EMDB" id="EMD-30548"/>
<dbReference type="EMDB" id="EMD-31062"/>
<dbReference type="SMR" id="P0A387"/>
<dbReference type="DIP" id="DIP-48861N"/>
<dbReference type="IntAct" id="P0A387">
    <property type="interactions" value="20"/>
</dbReference>
<dbReference type="EvolutionaryTrace" id="P0A387"/>
<dbReference type="GO" id="GO:0009523">
    <property type="term" value="C:photosystem II"/>
    <property type="evidence" value="ECO:0007669"/>
    <property type="project" value="UniProtKB-KW"/>
</dbReference>
<dbReference type="GO" id="GO:0031676">
    <property type="term" value="C:plasma membrane-derived thylakoid membrane"/>
    <property type="evidence" value="ECO:0007669"/>
    <property type="project" value="UniProtKB-SubCell"/>
</dbReference>
<dbReference type="GO" id="GO:0009055">
    <property type="term" value="F:electron transfer activity"/>
    <property type="evidence" value="ECO:0007669"/>
    <property type="project" value="InterPro"/>
</dbReference>
<dbReference type="GO" id="GO:0020037">
    <property type="term" value="F:heme binding"/>
    <property type="evidence" value="ECO:0007669"/>
    <property type="project" value="InterPro"/>
</dbReference>
<dbReference type="GO" id="GO:0005506">
    <property type="term" value="F:iron ion binding"/>
    <property type="evidence" value="ECO:0007669"/>
    <property type="project" value="InterPro"/>
</dbReference>
<dbReference type="GO" id="GO:0019684">
    <property type="term" value="P:photosynthesis, light reaction"/>
    <property type="evidence" value="ECO:0007669"/>
    <property type="project" value="UniProtKB-UniRule"/>
</dbReference>
<dbReference type="GO" id="GO:0022904">
    <property type="term" value="P:respiratory electron transport chain"/>
    <property type="evidence" value="ECO:0007669"/>
    <property type="project" value="InterPro"/>
</dbReference>
<dbReference type="Gene3D" id="1.10.760.10">
    <property type="entry name" value="Cytochrome c-like domain"/>
    <property type="match status" value="1"/>
</dbReference>
<dbReference type="HAMAP" id="MF_01378">
    <property type="entry name" value="PSII_Cyt550"/>
    <property type="match status" value="1"/>
</dbReference>
<dbReference type="InterPro" id="IPR009056">
    <property type="entry name" value="Cyt_c-like_dom"/>
</dbReference>
<dbReference type="InterPro" id="IPR036909">
    <property type="entry name" value="Cyt_c-like_dom_sf"/>
</dbReference>
<dbReference type="InterPro" id="IPR029490">
    <property type="entry name" value="Cytochrom_C550"/>
</dbReference>
<dbReference type="InterPro" id="IPR017851">
    <property type="entry name" value="PsbV_cyt_c550"/>
</dbReference>
<dbReference type="InterPro" id="IPR016003">
    <property type="entry name" value="PsbV_cyt_c550-like"/>
</dbReference>
<dbReference type="NCBIfam" id="TIGR03045">
    <property type="entry name" value="PS_II_C550"/>
    <property type="match status" value="1"/>
</dbReference>
<dbReference type="Pfam" id="PF14495">
    <property type="entry name" value="Cytochrom_C550"/>
    <property type="match status" value="1"/>
</dbReference>
<dbReference type="PIRSF" id="PIRSF005890">
    <property type="entry name" value="Phot_II_cyt_c550"/>
    <property type="match status" value="1"/>
</dbReference>
<dbReference type="SUPFAM" id="SSF46626">
    <property type="entry name" value="Cytochrome c"/>
    <property type="match status" value="1"/>
</dbReference>
<dbReference type="PROSITE" id="PS51007">
    <property type="entry name" value="CYTC"/>
    <property type="match status" value="1"/>
</dbReference>
<comment type="function">
    <text evidence="1 5 6 8 9">One of the extrinsic, lumenal subunits of photosystem II (PSII). PSII is a light-driven water plastoquinone oxidoreductase, using light energy to abstract electrons from H(2)O, generating a proton gradient subsequently used for ATP formation. The extrinsic proteins stabilize the structure of photosystem II oxygen-evolving complex (OEC), the ion environment of oxygen evolution and protect the OEC against heat-induced inactivation. Low-potential cytochrome c that plays a role in the OEC of PSII.</text>
</comment>
<comment type="function">
    <text evidence="4 9">Binds to PSII in the absence of other extrinsic proteins; required for binding of the PsbU protein to photosystem II. In PSII particles without oxygen-evolving activity, maximal activity is restored only by binding of cytochrome c550, PsbU and the 33 kDa PsbO protein.</text>
</comment>
<comment type="cofactor">
    <cofactor evidence="1 3 6 7 8 10">
        <name>heme c</name>
        <dbReference type="ChEBI" id="CHEBI:61717"/>
    </cofactor>
    <text evidence="1 3 6 7 8 10">Binds 1 heme c group covalently per subunit. PSII binds multiple chlorophylls, carotenoids and specific lipids.</text>
</comment>
<comment type="subunit">
    <text evidence="1 2 3 5 6 7 8 10">PSII is composed of 1 copy each of membrane proteins PsbA, PsbB, PsbC, PsbD, PsbE, PsbF, PsbH, PsbI, PsbJ, PsbK, PsbL, PsbM, PsbT, PsbX, PsbY, PsbZ, Psb30/Ycf12, peripheral proteins PsbO, CyanoQ (PsbQ), PsbU, PsbV and a large number of cofactors. It forms dimeric complexes.</text>
</comment>
<comment type="subcellular location">
    <subcellularLocation>
        <location evidence="1 3 6 7 8">Cellular thylakoid membrane</location>
        <topology evidence="1 3 6 7 8">Peripheral membrane protein</topology>
        <orientation evidence="1 3 6 7 8 10">Lumenal side</orientation>
    </subcellularLocation>
    <text evidence="3 6 7 8 10">Associated with photosystem II at the lumenal side of the thylakoid membrane.</text>
</comment>
<comment type="similarity">
    <text evidence="1">Belongs to the cytochrome c family. PsbV subfamily.</text>
</comment>
<evidence type="ECO:0000255" key="1">
    <source>
        <dbReference type="HAMAP-Rule" id="MF_01378"/>
    </source>
</evidence>
<evidence type="ECO:0000269" key="2">
    <source>
    </source>
</evidence>
<evidence type="ECO:0000269" key="3">
    <source>
    </source>
</evidence>
<evidence type="ECO:0000269" key="4">
    <source>
    </source>
</evidence>
<evidence type="ECO:0000269" key="5">
    <source>
    </source>
</evidence>
<evidence type="ECO:0000269" key="6">
    <source>
    </source>
</evidence>
<evidence type="ECO:0000269" key="7">
    <source>
    </source>
</evidence>
<evidence type="ECO:0000269" key="8">
    <source>
    </source>
</evidence>
<evidence type="ECO:0000269" key="9">
    <source>
    </source>
</evidence>
<evidence type="ECO:0000269" key="10">
    <source>
    </source>
</evidence>
<evidence type="ECO:0000303" key="11">
    <source>
    </source>
</evidence>
<evidence type="ECO:0000303" key="12">
    <source>
    </source>
</evidence>
<evidence type="ECO:0000303" key="13">
    <source>
    </source>
</evidence>
<evidence type="ECO:0007829" key="14">
    <source>
        <dbReference type="PDB" id="5B66"/>
    </source>
</evidence>
<evidence type="ECO:0007829" key="15">
    <source>
        <dbReference type="PDB" id="7EDA"/>
    </source>
</evidence>
<organism>
    <name type="scientific">Thermostichus vulcanus</name>
    <name type="common">Synechococcus vulcanus</name>
    <dbReference type="NCBI Taxonomy" id="32053"/>
    <lineage>
        <taxon>Bacteria</taxon>
        <taxon>Bacillati</taxon>
        <taxon>Cyanobacteriota</taxon>
        <taxon>Cyanophyceae</taxon>
        <taxon>Thermostichales</taxon>
        <taxon>Thermostichaceae</taxon>
        <taxon>Thermostichus</taxon>
    </lineage>
</organism>
<accession>P0A387</accession>
<accession>P56150</accession>
<accession>Q9ETF4</accession>
<name>CY550_THEVL</name>
<keyword id="KW-0002">3D-structure</keyword>
<keyword id="KW-0903">Direct protein sequencing</keyword>
<keyword id="KW-0249">Electron transport</keyword>
<keyword id="KW-0349">Heme</keyword>
<keyword id="KW-0408">Iron</keyword>
<keyword id="KW-0472">Membrane</keyword>
<keyword id="KW-0479">Metal-binding</keyword>
<keyword id="KW-0602">Photosynthesis</keyword>
<keyword id="KW-0604">Photosystem II</keyword>
<keyword id="KW-0732">Signal</keyword>
<keyword id="KW-0793">Thylakoid</keyword>
<keyword id="KW-0813">Transport</keyword>
<feature type="signal peptide" evidence="1 2 5">
    <location>
        <begin position="1"/>
        <end position="26"/>
    </location>
</feature>
<feature type="chain" id="PRO_0000006519" description="Photosystem II extrinsic protein V">
    <location>
        <begin position="27"/>
        <end position="163"/>
    </location>
</feature>
<feature type="binding site" description="covalent" evidence="7 8">
    <location>
        <position position="63"/>
    </location>
    <ligand>
        <name>heme c</name>
        <dbReference type="ChEBI" id="CHEBI:61717"/>
    </ligand>
</feature>
<feature type="binding site" description="covalent" evidence="7 8">
    <location>
        <position position="66"/>
    </location>
    <ligand>
        <name>heme c</name>
        <dbReference type="ChEBI" id="CHEBI:61717"/>
    </ligand>
</feature>
<feature type="binding site" description="axial binding residue" evidence="7 8 12 13">
    <location>
        <position position="67"/>
    </location>
    <ligand>
        <name>heme c</name>
        <dbReference type="ChEBI" id="CHEBI:61717"/>
    </ligand>
    <ligandPart>
        <name>Fe</name>
        <dbReference type="ChEBI" id="CHEBI:18248"/>
    </ligandPart>
</feature>
<feature type="binding site" description="axial binding residue" evidence="7 8 12 13">
    <location>
        <position position="118"/>
    </location>
    <ligand>
        <name>heme c</name>
        <dbReference type="ChEBI" id="CHEBI:61717"/>
    </ligand>
    <ligandPart>
        <name>Fe</name>
        <dbReference type="ChEBI" id="CHEBI:18248"/>
    </ligandPart>
</feature>
<feature type="turn" evidence="14">
    <location>
        <begin position="31"/>
        <end position="34"/>
    </location>
</feature>
<feature type="strand" evidence="14">
    <location>
        <begin position="35"/>
        <end position="39"/>
    </location>
</feature>
<feature type="strand" evidence="14">
    <location>
        <begin position="44"/>
        <end position="46"/>
    </location>
</feature>
<feature type="helix" evidence="14">
    <location>
        <begin position="49"/>
        <end position="62"/>
    </location>
</feature>
<feature type="helix" evidence="14">
    <location>
        <begin position="64"/>
        <end position="67"/>
    </location>
</feature>
<feature type="helix" evidence="14">
    <location>
        <begin position="68"/>
        <end position="70"/>
    </location>
</feature>
<feature type="helix" evidence="14">
    <location>
        <begin position="82"/>
        <end position="86"/>
    </location>
</feature>
<feature type="strand" evidence="14">
    <location>
        <begin position="88"/>
        <end position="90"/>
    </location>
</feature>
<feature type="helix" evidence="14">
    <location>
        <begin position="95"/>
        <end position="103"/>
    </location>
</feature>
<feature type="strand" evidence="15">
    <location>
        <begin position="110"/>
        <end position="113"/>
    </location>
</feature>
<feature type="turn" evidence="14">
    <location>
        <begin position="115"/>
        <end position="117"/>
    </location>
</feature>
<feature type="turn" evidence="14">
    <location>
        <begin position="122"/>
        <end position="126"/>
    </location>
</feature>
<feature type="helix" evidence="14">
    <location>
        <begin position="128"/>
        <end position="130"/>
    </location>
</feature>
<feature type="helix" evidence="14">
    <location>
        <begin position="135"/>
        <end position="152"/>
    </location>
</feature>
<feature type="helix" evidence="14">
    <location>
        <begin position="153"/>
        <end position="155"/>
    </location>
</feature>
<feature type="turn" evidence="14">
    <location>
        <begin position="156"/>
        <end position="158"/>
    </location>
</feature>
<feature type="helix" evidence="14">
    <location>
        <begin position="160"/>
        <end position="162"/>
    </location>
</feature>
<sequence length="163" mass="18027">MLKKCVWLAVALCLCLWQFTMGTALAAELTPEVLTVPLNSEGKTITLTEKQYLEGKRLFQYACASCHVGGITKTNPSLDLRTETLALATPPRDNIEGLVDYMKNPTTYDGEQEIAEVHPSLRSADIFPKMRNLTEKDLVAIAGHILVEPKILGDKWGGGKVYY</sequence>